<protein>
    <recommendedName>
        <fullName>Serine protease 55</fullName>
        <ecNumber>3.4.21.-</ecNumber>
    </recommendedName>
    <alternativeName>
        <fullName evidence="10">Testis serine protease 1</fullName>
        <shortName evidence="10">T-SP1</shortName>
    </alternativeName>
</protein>
<accession>Q6UWB4</accession>
<accession>E5RJX5</accession>
<sequence length="352" mass="38856">MLLFSVLLLLSLVTGTQLGPRTPLPEAGVAILGRARGAHRPQPPHPPSPVSECGDRSIFEGRTRYSRITGGMEAEVGEFPWQVSIQARSEPFCGGSILNKWWILTAAHCLYSEELFPEELSVVLGTNDLTSPSMEIKEVASIILHKDFKRANMDNDIALLLLASPIKLDDLKVPICLPTQPGPATWRECWVAGWGQTNAADKNSVKTDLMKAPMVIMDWEECSKMFPKLTKNMLCAGYKNESYDACKGDSGGPLVCTPEPGEKWYQVGIISWGKSCGEKNTPGIYTSLVNYNLWIEKVTQLEGRPFNAEKRRTSVKQKPMGSPVSGVPEPGSPRSWLLLCPLSHVLFRAILY</sequence>
<organism>
    <name type="scientific">Homo sapiens</name>
    <name type="common">Human</name>
    <dbReference type="NCBI Taxonomy" id="9606"/>
    <lineage>
        <taxon>Eukaryota</taxon>
        <taxon>Metazoa</taxon>
        <taxon>Chordata</taxon>
        <taxon>Craniata</taxon>
        <taxon>Vertebrata</taxon>
        <taxon>Euteleostomi</taxon>
        <taxon>Mammalia</taxon>
        <taxon>Eutheria</taxon>
        <taxon>Euarchontoglires</taxon>
        <taxon>Primates</taxon>
        <taxon>Haplorrhini</taxon>
        <taxon>Catarrhini</taxon>
        <taxon>Hominidae</taxon>
        <taxon>Homo</taxon>
    </lineage>
</organism>
<dbReference type="EC" id="3.4.21.-"/>
<dbReference type="EMBL" id="AY358867">
    <property type="protein sequence ID" value="AAQ89226.1"/>
    <property type="molecule type" value="mRNA"/>
</dbReference>
<dbReference type="EMBL" id="AC104964">
    <property type="status" value="NOT_ANNOTATED_CDS"/>
    <property type="molecule type" value="Genomic_DNA"/>
</dbReference>
<dbReference type="EMBL" id="BC033497">
    <property type="status" value="NOT_ANNOTATED_CDS"/>
    <property type="molecule type" value="mRNA"/>
</dbReference>
<dbReference type="CCDS" id="CCDS56523.1">
    <molecule id="Q6UWB4-2"/>
</dbReference>
<dbReference type="CCDS" id="CCDS5976.1">
    <molecule id="Q6UWB4-1"/>
</dbReference>
<dbReference type="RefSeq" id="NP_001183949.1">
    <molecule id="Q6UWB4-2"/>
    <property type="nucleotide sequence ID" value="NM_001197020.2"/>
</dbReference>
<dbReference type="RefSeq" id="NP_940866.2">
    <molecule id="Q6UWB4-1"/>
    <property type="nucleotide sequence ID" value="NM_198464.4"/>
</dbReference>
<dbReference type="SMR" id="Q6UWB4"/>
<dbReference type="FunCoup" id="Q6UWB4">
    <property type="interactions" value="102"/>
</dbReference>
<dbReference type="STRING" id="9606.ENSP00000333003"/>
<dbReference type="MEROPS" id="S01.299"/>
<dbReference type="GlyCosmos" id="Q6UWB4">
    <property type="glycosylation" value="1 site, No reported glycans"/>
</dbReference>
<dbReference type="GlyGen" id="Q6UWB4">
    <property type="glycosylation" value="2 sites, 1 O-linked glycan (1 site)"/>
</dbReference>
<dbReference type="BioMuta" id="PRSS55"/>
<dbReference type="DMDM" id="296453030"/>
<dbReference type="jPOST" id="Q6UWB4"/>
<dbReference type="MassIVE" id="Q6UWB4"/>
<dbReference type="PaxDb" id="9606-ENSP00000333003"/>
<dbReference type="PeptideAtlas" id="Q6UWB4"/>
<dbReference type="ProteomicsDB" id="16739"/>
<dbReference type="ProteomicsDB" id="67463">
    <molecule id="Q6UWB4-1"/>
</dbReference>
<dbReference type="Antibodypedia" id="8438">
    <property type="antibodies" value="74 antibodies from 13 providers"/>
</dbReference>
<dbReference type="DNASU" id="203074"/>
<dbReference type="Ensembl" id="ENST00000328655.8">
    <molecule id="Q6UWB4-1"/>
    <property type="protein sequence ID" value="ENSP00000333003.3"/>
    <property type="gene ID" value="ENSG00000184647.11"/>
</dbReference>
<dbReference type="Ensembl" id="ENST00000522210.1">
    <molecule id="Q6UWB4-2"/>
    <property type="protein sequence ID" value="ENSP00000430459.1"/>
    <property type="gene ID" value="ENSG00000184647.11"/>
</dbReference>
<dbReference type="GeneID" id="203074"/>
<dbReference type="KEGG" id="hsa:203074"/>
<dbReference type="MANE-Select" id="ENST00000328655.8">
    <property type="protein sequence ID" value="ENSP00000333003.3"/>
    <property type="RefSeq nucleotide sequence ID" value="NM_198464.4"/>
    <property type="RefSeq protein sequence ID" value="NP_940866.2"/>
</dbReference>
<dbReference type="UCSC" id="uc003wta.4">
    <molecule id="Q6UWB4-1"/>
    <property type="organism name" value="human"/>
</dbReference>
<dbReference type="AGR" id="HGNC:30824"/>
<dbReference type="CTD" id="203074"/>
<dbReference type="DisGeNET" id="203074"/>
<dbReference type="GeneCards" id="PRSS55"/>
<dbReference type="HGNC" id="HGNC:30824">
    <property type="gene designation" value="PRSS55"/>
</dbReference>
<dbReference type="HPA" id="ENSG00000184647">
    <property type="expression patterns" value="Tissue enriched (testis)"/>
</dbReference>
<dbReference type="MIM" id="615144">
    <property type="type" value="gene"/>
</dbReference>
<dbReference type="neXtProt" id="NX_Q6UWB4"/>
<dbReference type="OpenTargets" id="ENSG00000184647"/>
<dbReference type="PharmGKB" id="PA165585933"/>
<dbReference type="VEuPathDB" id="HostDB:ENSG00000184647"/>
<dbReference type="eggNOG" id="KOG3627">
    <property type="taxonomic scope" value="Eukaryota"/>
</dbReference>
<dbReference type="GeneTree" id="ENSGT00940000156020"/>
<dbReference type="HOGENOM" id="CLU_006842_0_4_1"/>
<dbReference type="InParanoid" id="Q6UWB4"/>
<dbReference type="OMA" id="GVGEFPW"/>
<dbReference type="OrthoDB" id="546450at2759"/>
<dbReference type="PAN-GO" id="Q6UWB4">
    <property type="GO annotations" value="0 GO annotations based on evolutionary models"/>
</dbReference>
<dbReference type="PhylomeDB" id="Q6UWB4"/>
<dbReference type="TreeFam" id="TF338267"/>
<dbReference type="PathwayCommons" id="Q6UWB4"/>
<dbReference type="BioGRID-ORCS" id="203074">
    <property type="hits" value="10 hits in 1140 CRISPR screens"/>
</dbReference>
<dbReference type="GenomeRNAi" id="203074"/>
<dbReference type="Pharos" id="Q6UWB4">
    <property type="development level" value="Tbio"/>
</dbReference>
<dbReference type="PRO" id="PR:Q6UWB4"/>
<dbReference type="Proteomes" id="UP000005640">
    <property type="component" value="Chromosome 8"/>
</dbReference>
<dbReference type="RNAct" id="Q6UWB4">
    <property type="molecule type" value="protein"/>
</dbReference>
<dbReference type="Bgee" id="ENSG00000184647">
    <property type="expression patterns" value="Expressed in primordial germ cell in gonad and 39 other cell types or tissues"/>
</dbReference>
<dbReference type="ExpressionAtlas" id="Q6UWB4">
    <property type="expression patterns" value="baseline and differential"/>
</dbReference>
<dbReference type="GO" id="GO:0001669">
    <property type="term" value="C:acrosomal vesicle"/>
    <property type="evidence" value="ECO:0000250"/>
    <property type="project" value="UniProtKB"/>
</dbReference>
<dbReference type="GO" id="GO:0005829">
    <property type="term" value="C:cytosol"/>
    <property type="evidence" value="ECO:0000314"/>
    <property type="project" value="UniProtKB"/>
</dbReference>
<dbReference type="GO" id="GO:0005886">
    <property type="term" value="C:plasma membrane"/>
    <property type="evidence" value="ECO:0000314"/>
    <property type="project" value="UniProtKB"/>
</dbReference>
<dbReference type="GO" id="GO:0098552">
    <property type="term" value="C:side of membrane"/>
    <property type="evidence" value="ECO:0007669"/>
    <property type="project" value="UniProtKB-KW"/>
</dbReference>
<dbReference type="GO" id="GO:0004252">
    <property type="term" value="F:serine-type endopeptidase activity"/>
    <property type="evidence" value="ECO:0007669"/>
    <property type="project" value="InterPro"/>
</dbReference>
<dbReference type="GO" id="GO:0007339">
    <property type="term" value="P:binding of sperm to zona pellucida"/>
    <property type="evidence" value="ECO:0000250"/>
    <property type="project" value="UniProtKB"/>
</dbReference>
<dbReference type="GO" id="GO:0030317">
    <property type="term" value="P:flagellated sperm motility"/>
    <property type="evidence" value="ECO:0000250"/>
    <property type="project" value="UniProtKB"/>
</dbReference>
<dbReference type="GO" id="GO:0006508">
    <property type="term" value="P:proteolysis"/>
    <property type="evidence" value="ECO:0007669"/>
    <property type="project" value="UniProtKB-KW"/>
</dbReference>
<dbReference type="CDD" id="cd00190">
    <property type="entry name" value="Tryp_SPc"/>
    <property type="match status" value="1"/>
</dbReference>
<dbReference type="FunFam" id="2.40.10.10:FF:000006">
    <property type="entry name" value="Serine proteinase stubble"/>
    <property type="match status" value="1"/>
</dbReference>
<dbReference type="Gene3D" id="2.40.10.10">
    <property type="entry name" value="Trypsin-like serine proteases"/>
    <property type="match status" value="1"/>
</dbReference>
<dbReference type="InterPro" id="IPR009003">
    <property type="entry name" value="Peptidase_S1_PA"/>
</dbReference>
<dbReference type="InterPro" id="IPR043504">
    <property type="entry name" value="Peptidase_S1_PA_chymotrypsin"/>
</dbReference>
<dbReference type="InterPro" id="IPR001314">
    <property type="entry name" value="Peptidase_S1A"/>
</dbReference>
<dbReference type="InterPro" id="IPR001254">
    <property type="entry name" value="Trypsin_dom"/>
</dbReference>
<dbReference type="InterPro" id="IPR018114">
    <property type="entry name" value="TRYPSIN_HIS"/>
</dbReference>
<dbReference type="InterPro" id="IPR033116">
    <property type="entry name" value="TRYPSIN_SER"/>
</dbReference>
<dbReference type="PANTHER" id="PTHR24252">
    <property type="entry name" value="ACROSIN-RELATED"/>
    <property type="match status" value="1"/>
</dbReference>
<dbReference type="PANTHER" id="PTHR24252:SF17">
    <property type="entry name" value="SUPPRESSOR OF TUMORIGENICITY 14 PROTEIN HOMOLOG-RELATED"/>
    <property type="match status" value="1"/>
</dbReference>
<dbReference type="Pfam" id="PF00089">
    <property type="entry name" value="Trypsin"/>
    <property type="match status" value="1"/>
</dbReference>
<dbReference type="PRINTS" id="PR00722">
    <property type="entry name" value="CHYMOTRYPSIN"/>
</dbReference>
<dbReference type="SMART" id="SM00020">
    <property type="entry name" value="Tryp_SPc"/>
    <property type="match status" value="1"/>
</dbReference>
<dbReference type="SUPFAM" id="SSF50494">
    <property type="entry name" value="Trypsin-like serine proteases"/>
    <property type="match status" value="1"/>
</dbReference>
<dbReference type="PROSITE" id="PS50240">
    <property type="entry name" value="TRYPSIN_DOM"/>
    <property type="match status" value="1"/>
</dbReference>
<dbReference type="PROSITE" id="PS00134">
    <property type="entry name" value="TRYPSIN_HIS"/>
    <property type="match status" value="1"/>
</dbReference>
<dbReference type="PROSITE" id="PS00135">
    <property type="entry name" value="TRYPSIN_SER"/>
    <property type="match status" value="1"/>
</dbReference>
<comment type="function">
    <text evidence="2">Probable serine protease, which plays a crucial role in the fertility of male mice including sperm migration and sperm-egg interaction.</text>
</comment>
<comment type="subcellular location">
    <molecule>Isoform 1</molecule>
    <subcellularLocation>
        <location evidence="7">Cell membrane</location>
        <topology evidence="2">Lipid-anchor</topology>
        <topology evidence="2">GPI-anchor</topology>
    </subcellularLocation>
    <subcellularLocation>
        <location evidence="7">Cytoplasm</location>
        <location evidence="7">Cytosol</location>
    </subcellularLocation>
    <text evidence="7">Mainly found in the membrane part of the cells and only in small amounts in the cytosol.</text>
</comment>
<comment type="subcellular location">
    <molecule>Isoform 2</molecule>
    <subcellularLocation>
        <location evidence="7">Cytoplasm</location>
        <location evidence="7">Cytosol</location>
    </subcellularLocation>
    <text evidence="7">Present primarily in the cytosol and only in minor amounts in the membrane fraction.</text>
</comment>
<comment type="alternative products">
    <event type="alternative splicing"/>
    <isoform>
        <id>Q6UWB4-1</id>
        <name>1</name>
        <sequence type="displayed"/>
    </isoform>
    <isoform>
        <id>Q6UWB4-2</id>
        <name>2</name>
        <sequence type="described" ref="VSP_044557"/>
    </isoform>
    <text>Additional isoforms seem to exist.</text>
</comment>
<comment type="tissue specificity">
    <text evidence="7 8">Only detected in testis. Expressed in spermatogonia, spermatocytes, spermatids, Leydig and Sertoli cells. Expressed in prostate cancer and ovarian cancer (at protein level).</text>
</comment>
<comment type="similarity">
    <text evidence="4">Belongs to the peptidase S1 family.</text>
</comment>
<comment type="caution">
    <text evidence="2 7 11">Controversial data exist concerning the topology of PRSS55. One study in mouse shows that PRS55 is a GPI-anchored protein (By similarity). An other study does not confirm the GPI-anchor status of PRSS55 (PubMed:18844450). However as a GPI-anchor motif is detected, the possibility of a GPI-anchor instead of a single-pass type I membrane protein is probable.</text>
</comment>
<gene>
    <name type="primary">PRSS55</name>
    <name evidence="10" type="synonym">TSP1</name>
    <name type="ORF">UNQ9391/PRO34284</name>
</gene>
<proteinExistence type="evidence at protein level"/>
<name>PRS55_HUMAN</name>
<reference key="1">
    <citation type="journal article" date="2003" name="Genome Res.">
        <title>The secreted protein discovery initiative (SPDI), a large-scale effort to identify novel human secreted and transmembrane proteins: a bioinformatics assessment.</title>
        <authorList>
            <person name="Clark H.F."/>
            <person name="Gurney A.L."/>
            <person name="Abaya E."/>
            <person name="Baker K."/>
            <person name="Baldwin D.T."/>
            <person name="Brush J."/>
            <person name="Chen J."/>
            <person name="Chow B."/>
            <person name="Chui C."/>
            <person name="Crowley C."/>
            <person name="Currell B."/>
            <person name="Deuel B."/>
            <person name="Dowd P."/>
            <person name="Eaton D."/>
            <person name="Foster J.S."/>
            <person name="Grimaldi C."/>
            <person name="Gu Q."/>
            <person name="Hass P.E."/>
            <person name="Heldens S."/>
            <person name="Huang A."/>
            <person name="Kim H.S."/>
            <person name="Klimowski L."/>
            <person name="Jin Y."/>
            <person name="Johnson S."/>
            <person name="Lee J."/>
            <person name="Lewis L."/>
            <person name="Liao D."/>
            <person name="Mark M.R."/>
            <person name="Robbie E."/>
            <person name="Sanchez C."/>
            <person name="Schoenfeld J."/>
            <person name="Seshagiri S."/>
            <person name="Simmons L."/>
            <person name="Singh J."/>
            <person name="Smith V."/>
            <person name="Stinson J."/>
            <person name="Vagts A."/>
            <person name="Vandlen R.L."/>
            <person name="Watanabe C."/>
            <person name="Wieand D."/>
            <person name="Woods K."/>
            <person name="Xie M.-H."/>
            <person name="Yansura D.G."/>
            <person name="Yi S."/>
            <person name="Yu G."/>
            <person name="Yuan J."/>
            <person name="Zhang M."/>
            <person name="Zhang Z."/>
            <person name="Goddard A.D."/>
            <person name="Wood W.I."/>
            <person name="Godowski P.J."/>
            <person name="Gray A.M."/>
        </authorList>
    </citation>
    <scope>NUCLEOTIDE SEQUENCE [LARGE SCALE MRNA] (ISOFORM 1)</scope>
    <scope>VARIANTS ARG-44 AND VAL-212</scope>
</reference>
<reference key="2">
    <citation type="journal article" date="2006" name="Nature">
        <title>DNA sequence and analysis of human chromosome 8.</title>
        <authorList>
            <person name="Nusbaum C."/>
            <person name="Mikkelsen T.S."/>
            <person name="Zody M.C."/>
            <person name="Asakawa S."/>
            <person name="Taudien S."/>
            <person name="Garber M."/>
            <person name="Kodira C.D."/>
            <person name="Schueler M.G."/>
            <person name="Shimizu A."/>
            <person name="Whittaker C.A."/>
            <person name="Chang J.L."/>
            <person name="Cuomo C.A."/>
            <person name="Dewar K."/>
            <person name="FitzGerald M.G."/>
            <person name="Yang X."/>
            <person name="Allen N.R."/>
            <person name="Anderson S."/>
            <person name="Asakawa T."/>
            <person name="Blechschmidt K."/>
            <person name="Bloom T."/>
            <person name="Borowsky M.L."/>
            <person name="Butler J."/>
            <person name="Cook A."/>
            <person name="Corum B."/>
            <person name="DeArellano K."/>
            <person name="DeCaprio D."/>
            <person name="Dooley K.T."/>
            <person name="Dorris L. III"/>
            <person name="Engels R."/>
            <person name="Gloeckner G."/>
            <person name="Hafez N."/>
            <person name="Hagopian D.S."/>
            <person name="Hall J.L."/>
            <person name="Ishikawa S.K."/>
            <person name="Jaffe D.B."/>
            <person name="Kamat A."/>
            <person name="Kudoh J."/>
            <person name="Lehmann R."/>
            <person name="Lokitsang T."/>
            <person name="Macdonald P."/>
            <person name="Major J.E."/>
            <person name="Matthews C.D."/>
            <person name="Mauceli E."/>
            <person name="Menzel U."/>
            <person name="Mihalev A.H."/>
            <person name="Minoshima S."/>
            <person name="Murayama Y."/>
            <person name="Naylor J.W."/>
            <person name="Nicol R."/>
            <person name="Nguyen C."/>
            <person name="O'Leary S.B."/>
            <person name="O'Neill K."/>
            <person name="Parker S.C.J."/>
            <person name="Polley A."/>
            <person name="Raymond C.K."/>
            <person name="Reichwald K."/>
            <person name="Rodriguez J."/>
            <person name="Sasaki T."/>
            <person name="Schilhabel M."/>
            <person name="Siddiqui R."/>
            <person name="Smith C.L."/>
            <person name="Sneddon T.P."/>
            <person name="Talamas J.A."/>
            <person name="Tenzin P."/>
            <person name="Topham K."/>
            <person name="Venkataraman V."/>
            <person name="Wen G."/>
            <person name="Yamazaki S."/>
            <person name="Young S.K."/>
            <person name="Zeng Q."/>
            <person name="Zimmer A.R."/>
            <person name="Rosenthal A."/>
            <person name="Birren B.W."/>
            <person name="Platzer M."/>
            <person name="Shimizu N."/>
            <person name="Lander E.S."/>
        </authorList>
    </citation>
    <scope>NUCLEOTIDE SEQUENCE [LARGE SCALE GENOMIC DNA]</scope>
</reference>
<reference key="3">
    <citation type="journal article" date="2004" name="Genome Res.">
        <title>The status, quality, and expansion of the NIH full-length cDNA project: the Mammalian Gene Collection (MGC).</title>
        <authorList>
            <consortium name="The MGC Project Team"/>
        </authorList>
    </citation>
    <scope>NUCLEOTIDE SEQUENCE [LARGE SCALE MRNA] (ISOFORM 2)</scope>
    <source>
        <tissue>Brain</tissue>
    </source>
</reference>
<reference key="4">
    <citation type="journal article" date="2008" name="Biol. Chem.">
        <title>T-SP1: a novel serine protease-like protein predominantly expressed in testis.</title>
        <authorList>
            <person name="Neth P."/>
            <person name="Profanter B."/>
            <person name="Geissler C."/>
            <person name="Naegler D.K."/>
            <person name="Nerlich A."/>
            <person name="Sommerhoff C.P."/>
            <person name="Jochum M."/>
        </authorList>
    </citation>
    <scope>NUCLEOTIDE SEQUENCE [MRNA] (ISOFORMS 1 AND 2)</scope>
    <scope>ALTERNATIVE SPLICING</scope>
    <scope>TISSUE SPECIFICITY</scope>
    <scope>SUBCELLULAR LOCATION</scope>
</reference>
<reference key="5">
    <citation type="journal article" date="2013" name="Proteomics">
        <title>Scanning of novel cancer/testis proteins by human testis proteomic analysis.</title>
        <authorList>
            <person name="Liu M."/>
            <person name="Hu Z."/>
            <person name="Qi L."/>
            <person name="Wang J."/>
            <person name="Zhou T."/>
            <person name="Guo Y."/>
            <person name="Zeng Y."/>
            <person name="Zheng B."/>
            <person name="Wu Y."/>
            <person name="Zhang P."/>
            <person name="Chen X."/>
            <person name="Tu W."/>
            <person name="Zhang T."/>
            <person name="Zhou Q."/>
            <person name="Jiang M."/>
            <person name="Guo X."/>
            <person name="Zhou Z."/>
            <person name="Sha J."/>
        </authorList>
    </citation>
    <scope>TISSUE SPECIFICITY</scope>
</reference>
<evidence type="ECO:0000250" key="1"/>
<evidence type="ECO:0000250" key="2">
    <source>
        <dbReference type="UniProtKB" id="Q14BX2"/>
    </source>
</evidence>
<evidence type="ECO:0000255" key="3"/>
<evidence type="ECO:0000255" key="4">
    <source>
        <dbReference type="PROSITE-ProRule" id="PRU00274"/>
    </source>
</evidence>
<evidence type="ECO:0000256" key="5">
    <source>
        <dbReference type="SAM" id="MobiDB-lite"/>
    </source>
</evidence>
<evidence type="ECO:0000269" key="6">
    <source>
    </source>
</evidence>
<evidence type="ECO:0000269" key="7">
    <source>
    </source>
</evidence>
<evidence type="ECO:0000269" key="8">
    <source>
    </source>
</evidence>
<evidence type="ECO:0000303" key="9">
    <source>
    </source>
</evidence>
<evidence type="ECO:0000303" key="10">
    <source>
    </source>
</evidence>
<evidence type="ECO:0000305" key="11"/>
<keyword id="KW-0025">Alternative splicing</keyword>
<keyword id="KW-1003">Cell membrane</keyword>
<keyword id="KW-0963">Cytoplasm</keyword>
<keyword id="KW-1015">Disulfide bond</keyword>
<keyword id="KW-0325">Glycoprotein</keyword>
<keyword id="KW-0336">GPI-anchor</keyword>
<keyword id="KW-0378">Hydrolase</keyword>
<keyword id="KW-0449">Lipoprotein</keyword>
<keyword id="KW-0472">Membrane</keyword>
<keyword id="KW-0645">Protease</keyword>
<keyword id="KW-1267">Proteomics identification</keyword>
<keyword id="KW-1185">Reference proteome</keyword>
<keyword id="KW-0720">Serine protease</keyword>
<keyword id="KW-0732">Signal</keyword>
<feature type="signal peptide" evidence="3">
    <location>
        <begin position="1"/>
        <end position="18"/>
    </location>
</feature>
<feature type="chain" id="PRO_0000328815" description="Serine protease 55">
    <location>
        <begin position="19"/>
        <end position="352"/>
    </location>
</feature>
<feature type="propeptide" id="PRO_0000449398" description="Removed in mature form" evidence="3">
    <location>
        <begin position="326"/>
        <end position="352"/>
    </location>
</feature>
<feature type="domain" description="Peptidase S1" evidence="4">
    <location>
        <begin position="68"/>
        <end position="300"/>
    </location>
</feature>
<feature type="region of interest" description="Disordered" evidence="5">
    <location>
        <begin position="308"/>
        <end position="330"/>
    </location>
</feature>
<feature type="compositionally biased region" description="Low complexity" evidence="5">
    <location>
        <begin position="319"/>
        <end position="330"/>
    </location>
</feature>
<feature type="active site" description="Charge relay system" evidence="1">
    <location>
        <position position="108"/>
    </location>
</feature>
<feature type="active site" description="Charge relay system" evidence="1">
    <location>
        <position position="156"/>
    </location>
</feature>
<feature type="active site" description="Charge relay system" evidence="1">
    <location>
        <position position="250"/>
    </location>
</feature>
<feature type="lipid moiety-binding region" description="GPI-anchor amidated serine" evidence="3">
    <location>
        <position position="325"/>
    </location>
</feature>
<feature type="glycosylation site" description="N-linked (GlcNAc...) asparagine" evidence="3">
    <location>
        <position position="240"/>
    </location>
</feature>
<feature type="disulfide bond" evidence="4">
    <location>
        <begin position="93"/>
        <end position="109"/>
    </location>
</feature>
<feature type="disulfide bond" evidence="4">
    <location>
        <begin position="189"/>
        <end position="256"/>
    </location>
</feature>
<feature type="disulfide bond" evidence="4">
    <location>
        <begin position="222"/>
        <end position="235"/>
    </location>
</feature>
<feature type="disulfide bond" evidence="4">
    <location>
        <begin position="246"/>
        <end position="276"/>
    </location>
</feature>
<feature type="splice variant" id="VSP_044557" description="In isoform 2." evidence="9 10">
    <original>GDSGGPLVCTPEPGEKWYQVGIISWGKSCGEKNTPGIYTSLVNYNLWIEKVTQLEGRPFNAEKRRTSVKQKPMGSPVSGVPEPGSPRSWLLLCPLSHVLFRAILY</original>
    <variation>QSYFPTLQRMNTGSSQTKPPGSHTFHLQN</variation>
    <location>
        <begin position="248"/>
        <end position="352"/>
    </location>
</feature>
<feature type="sequence variant" id="VAR_042525" description="In dbSNP:rs4521726." evidence="6">
    <original>P</original>
    <variation>R</variation>
    <location>
        <position position="44"/>
    </location>
</feature>
<feature type="sequence variant" id="VAR_042526" description="In dbSNP:rs4406360." evidence="6">
    <original>A</original>
    <variation>V</variation>
    <location>
        <position position="212"/>
    </location>
</feature>
<feature type="sequence conflict" description="In Ref. 3; BC033497." evidence="11" ref="3">
    <original>G</original>
    <variation>R</variation>
    <location>
        <position position="15"/>
    </location>
</feature>